<accession>B2KEU8</accession>
<protein>
    <recommendedName>
        <fullName evidence="1">Imidazole glycerol phosphate synthase subunit HisF</fullName>
        <ecNumber evidence="1">4.3.2.10</ecNumber>
    </recommendedName>
    <alternativeName>
        <fullName evidence="1">IGP synthase cyclase subunit</fullName>
    </alternativeName>
    <alternativeName>
        <fullName evidence="1">IGP synthase subunit HisF</fullName>
    </alternativeName>
    <alternativeName>
        <fullName evidence="1">ImGP synthase subunit HisF</fullName>
        <shortName evidence="1">IGPS subunit HisF</shortName>
    </alternativeName>
</protein>
<sequence length="250" mass="26778">MLAKRIIPCLDVKDGKTVKGVNFINFRDAGDPVALAAEYSRKGADEIVFLDITASHEKRKTLTDLARRVAAEVNIPFTIGGGVRELEDVSALLAAGADKVSLNSSALKNPNFITEIAKNFGSQVCVCAIDAKENNGKWTCYLNGGRIDTGKDLFVWAKEAENLGAGEILFTSMNHDGVKTGFANEALAKLGQIVNIPVIASGGAGSKEHFKDVFLLGHADAALAASVFHFGEIDISELKTYLRGNRIVVR</sequence>
<name>HIS6_ELUMP</name>
<comment type="function">
    <text evidence="1">IGPS catalyzes the conversion of PRFAR and glutamine to IGP, AICAR and glutamate. The HisF subunit catalyzes the cyclization activity that produces IGP and AICAR from PRFAR using the ammonia provided by the HisH subunit.</text>
</comment>
<comment type="catalytic activity">
    <reaction evidence="1">
        <text>5-[(5-phospho-1-deoxy-D-ribulos-1-ylimino)methylamino]-1-(5-phospho-beta-D-ribosyl)imidazole-4-carboxamide + L-glutamine = D-erythro-1-(imidazol-4-yl)glycerol 3-phosphate + 5-amino-1-(5-phospho-beta-D-ribosyl)imidazole-4-carboxamide + L-glutamate + H(+)</text>
        <dbReference type="Rhea" id="RHEA:24793"/>
        <dbReference type="ChEBI" id="CHEBI:15378"/>
        <dbReference type="ChEBI" id="CHEBI:29985"/>
        <dbReference type="ChEBI" id="CHEBI:58278"/>
        <dbReference type="ChEBI" id="CHEBI:58359"/>
        <dbReference type="ChEBI" id="CHEBI:58475"/>
        <dbReference type="ChEBI" id="CHEBI:58525"/>
        <dbReference type="EC" id="4.3.2.10"/>
    </reaction>
</comment>
<comment type="pathway">
    <text evidence="1">Amino-acid biosynthesis; L-histidine biosynthesis; L-histidine from 5-phospho-alpha-D-ribose 1-diphosphate: step 5/9.</text>
</comment>
<comment type="subunit">
    <text evidence="1">Heterodimer of HisH and HisF.</text>
</comment>
<comment type="subcellular location">
    <subcellularLocation>
        <location evidence="1">Cytoplasm</location>
    </subcellularLocation>
</comment>
<comment type="similarity">
    <text evidence="1">Belongs to the HisA/HisF family.</text>
</comment>
<dbReference type="EC" id="4.3.2.10" evidence="1"/>
<dbReference type="EMBL" id="CP001055">
    <property type="protein sequence ID" value="ACC99044.1"/>
    <property type="molecule type" value="Genomic_DNA"/>
</dbReference>
<dbReference type="RefSeq" id="WP_012415659.1">
    <property type="nucleotide sequence ID" value="NC_010644.1"/>
</dbReference>
<dbReference type="SMR" id="B2KEU8"/>
<dbReference type="STRING" id="445932.Emin_1496"/>
<dbReference type="KEGG" id="emi:Emin_1496"/>
<dbReference type="HOGENOM" id="CLU_048577_4_0_0"/>
<dbReference type="OrthoDB" id="9781903at2"/>
<dbReference type="UniPathway" id="UPA00031">
    <property type="reaction ID" value="UER00010"/>
</dbReference>
<dbReference type="Proteomes" id="UP000001029">
    <property type="component" value="Chromosome"/>
</dbReference>
<dbReference type="GO" id="GO:0005737">
    <property type="term" value="C:cytoplasm"/>
    <property type="evidence" value="ECO:0007669"/>
    <property type="project" value="UniProtKB-SubCell"/>
</dbReference>
<dbReference type="GO" id="GO:0000107">
    <property type="term" value="F:imidazoleglycerol-phosphate synthase activity"/>
    <property type="evidence" value="ECO:0007669"/>
    <property type="project" value="UniProtKB-UniRule"/>
</dbReference>
<dbReference type="GO" id="GO:0016829">
    <property type="term" value="F:lyase activity"/>
    <property type="evidence" value="ECO:0007669"/>
    <property type="project" value="UniProtKB-KW"/>
</dbReference>
<dbReference type="GO" id="GO:0000105">
    <property type="term" value="P:L-histidine biosynthetic process"/>
    <property type="evidence" value="ECO:0007669"/>
    <property type="project" value="UniProtKB-UniRule"/>
</dbReference>
<dbReference type="CDD" id="cd04731">
    <property type="entry name" value="HisF"/>
    <property type="match status" value="1"/>
</dbReference>
<dbReference type="FunFam" id="3.20.20.70:FF:000006">
    <property type="entry name" value="Imidazole glycerol phosphate synthase subunit HisF"/>
    <property type="match status" value="1"/>
</dbReference>
<dbReference type="Gene3D" id="3.20.20.70">
    <property type="entry name" value="Aldolase class I"/>
    <property type="match status" value="1"/>
</dbReference>
<dbReference type="HAMAP" id="MF_01013">
    <property type="entry name" value="HisF"/>
    <property type="match status" value="1"/>
</dbReference>
<dbReference type="InterPro" id="IPR013785">
    <property type="entry name" value="Aldolase_TIM"/>
</dbReference>
<dbReference type="InterPro" id="IPR006062">
    <property type="entry name" value="His_biosynth"/>
</dbReference>
<dbReference type="InterPro" id="IPR004651">
    <property type="entry name" value="HisF"/>
</dbReference>
<dbReference type="InterPro" id="IPR050064">
    <property type="entry name" value="IGPS_HisA/HisF"/>
</dbReference>
<dbReference type="InterPro" id="IPR011060">
    <property type="entry name" value="RibuloseP-bd_barrel"/>
</dbReference>
<dbReference type="NCBIfam" id="TIGR00735">
    <property type="entry name" value="hisF"/>
    <property type="match status" value="1"/>
</dbReference>
<dbReference type="PANTHER" id="PTHR21235:SF2">
    <property type="entry name" value="IMIDAZOLE GLYCEROL PHOSPHATE SYNTHASE HISHF"/>
    <property type="match status" value="1"/>
</dbReference>
<dbReference type="PANTHER" id="PTHR21235">
    <property type="entry name" value="IMIDAZOLE GLYCEROL PHOSPHATE SYNTHASE SUBUNIT HISF/H IGP SYNTHASE SUBUNIT HISF/H"/>
    <property type="match status" value="1"/>
</dbReference>
<dbReference type="Pfam" id="PF00977">
    <property type="entry name" value="His_biosynth"/>
    <property type="match status" value="1"/>
</dbReference>
<dbReference type="SUPFAM" id="SSF51366">
    <property type="entry name" value="Ribulose-phoshate binding barrel"/>
    <property type="match status" value="1"/>
</dbReference>
<gene>
    <name evidence="1" type="primary">hisF</name>
    <name type="ordered locus">Emin_1496</name>
</gene>
<keyword id="KW-0028">Amino-acid biosynthesis</keyword>
<keyword id="KW-0963">Cytoplasm</keyword>
<keyword id="KW-0368">Histidine biosynthesis</keyword>
<keyword id="KW-0456">Lyase</keyword>
<keyword id="KW-1185">Reference proteome</keyword>
<evidence type="ECO:0000255" key="1">
    <source>
        <dbReference type="HAMAP-Rule" id="MF_01013"/>
    </source>
</evidence>
<organism>
    <name type="scientific">Elusimicrobium minutum (strain Pei191)</name>
    <dbReference type="NCBI Taxonomy" id="445932"/>
    <lineage>
        <taxon>Bacteria</taxon>
        <taxon>Pseudomonadati</taxon>
        <taxon>Elusimicrobiota</taxon>
        <taxon>Elusimicrobia</taxon>
        <taxon>Elusimicrobiales</taxon>
        <taxon>Elusimicrobiaceae</taxon>
        <taxon>Elusimicrobium</taxon>
    </lineage>
</organism>
<reference key="1">
    <citation type="journal article" date="2009" name="Appl. Environ. Microbiol.">
        <title>Genomic analysis of 'Elusimicrobium minutum,' the first cultivated representative of the phylum 'Elusimicrobia' (formerly termite group 1).</title>
        <authorList>
            <person name="Herlemann D.P.R."/>
            <person name="Geissinger O."/>
            <person name="Ikeda-Ohtsubo W."/>
            <person name="Kunin V."/>
            <person name="Sun H."/>
            <person name="Lapidus A."/>
            <person name="Hugenholtz P."/>
            <person name="Brune A."/>
        </authorList>
    </citation>
    <scope>NUCLEOTIDE SEQUENCE [LARGE SCALE GENOMIC DNA]</scope>
    <source>
        <strain>Pei191</strain>
    </source>
</reference>
<feature type="chain" id="PRO_1000135001" description="Imidazole glycerol phosphate synthase subunit HisF">
    <location>
        <begin position="1"/>
        <end position="250"/>
    </location>
</feature>
<feature type="active site" evidence="1">
    <location>
        <position position="11"/>
    </location>
</feature>
<feature type="active site" evidence="1">
    <location>
        <position position="130"/>
    </location>
</feature>
<proteinExistence type="inferred from homology"/>